<reference key="1">
    <citation type="submission" date="2004-12" db="EMBL/GenBank/DDBJ databases">
        <authorList>
            <consortium name="NIH - Xenopus Gene Collection (XGC) project"/>
        </authorList>
    </citation>
    <scope>NUCLEOTIDE SEQUENCE [LARGE SCALE MRNA]</scope>
</reference>
<gene>
    <name type="primary">babam1</name>
    <name type="synonym">merit40</name>
    <name type="synonym">nba1</name>
</gene>
<protein>
    <recommendedName>
        <fullName>BRISC and BRCA1-A complex member 1</fullName>
    </recommendedName>
    <alternativeName>
        <fullName>Mediator of RAP80 interactions and targeting subunit of 40 kDa</fullName>
    </alternativeName>
    <alternativeName>
        <fullName>New component of the BRCA1-A complex</fullName>
    </alternativeName>
</protein>
<feature type="chain" id="PRO_0000288463" description="BRISC and BRCA1-A complex member 1">
    <location>
        <begin position="1"/>
        <end position="318"/>
    </location>
</feature>
<feature type="region of interest" description="Disordered" evidence="2">
    <location>
        <begin position="1"/>
        <end position="67"/>
    </location>
</feature>
<feature type="region of interest" description="VWFA-like">
    <location>
        <begin position="86"/>
        <end position="287"/>
    </location>
</feature>
<feature type="compositionally biased region" description="Basic and acidic residues" evidence="2">
    <location>
        <begin position="9"/>
        <end position="18"/>
    </location>
</feature>
<name>BABA1_XENTR</name>
<accession>Q5M8J0</accession>
<sequence>MDTSEPLEEGDRTHEQRPHTRSNPEGAEDREGLPQAGVGSRSEGEGEAAQVDDPLPTTTAVPTNCTPPPTLEFQLKTPRVNCPEKVIICLDLSEEMSTQKLESFNGSKANALNSSQKMIEMFVRTKHKIDKRHEFALVVANNEAMWLSGFTSDPREVCSCLYDLETNVCESFNLEGLFNLIQQRTEFPVTDNVQTIPPPYVVRIILIYSRPASQPALNLTDNMKKMLQCPYFFFDVIYIHNGSEEEELRWKDIFSFFSGLDSKGTSYKYEVSITGPALELHNCMARLLAHPLQRPFQSHAAYSLLEEEEESPESEVTV</sequence>
<evidence type="ECO:0000250" key="1">
    <source>
        <dbReference type="UniProtKB" id="Q9NWV8"/>
    </source>
</evidence>
<evidence type="ECO:0000256" key="2">
    <source>
        <dbReference type="SAM" id="MobiDB-lite"/>
    </source>
</evidence>
<evidence type="ECO:0000305" key="3"/>
<proteinExistence type="evidence at transcript level"/>
<dbReference type="EMBL" id="BC088001">
    <property type="protein sequence ID" value="AAH88001.1"/>
    <property type="molecule type" value="mRNA"/>
</dbReference>
<dbReference type="RefSeq" id="NP_001011287.1">
    <property type="nucleotide sequence ID" value="NM_001011287.1"/>
</dbReference>
<dbReference type="RefSeq" id="XP_012816559.1">
    <property type="nucleotide sequence ID" value="XM_012961105.2"/>
</dbReference>
<dbReference type="RefSeq" id="XP_012816562.1">
    <property type="nucleotide sequence ID" value="XM_012961108.2"/>
</dbReference>
<dbReference type="RefSeq" id="XP_012816568.1">
    <property type="nucleotide sequence ID" value="XM_012961114.3"/>
</dbReference>
<dbReference type="RefSeq" id="XP_012816572.1">
    <property type="nucleotide sequence ID" value="XM_012961118.3"/>
</dbReference>
<dbReference type="SMR" id="Q5M8J0"/>
<dbReference type="FunCoup" id="Q5M8J0">
    <property type="interactions" value="3929"/>
</dbReference>
<dbReference type="STRING" id="8364.ENSXETP00000041959"/>
<dbReference type="PaxDb" id="8364-ENSXETP00000054427"/>
<dbReference type="DNASU" id="496740"/>
<dbReference type="GeneID" id="496740"/>
<dbReference type="KEGG" id="xtr:496740"/>
<dbReference type="AGR" id="Xenbase:XB-GENE-5731069"/>
<dbReference type="CTD" id="29086"/>
<dbReference type="Xenbase" id="XB-GENE-5731069">
    <property type="gene designation" value="babam1"/>
</dbReference>
<dbReference type="eggNOG" id="ENOG502QPZP">
    <property type="taxonomic scope" value="Eukaryota"/>
</dbReference>
<dbReference type="HOGENOM" id="CLU_077295_0_0_1"/>
<dbReference type="InParanoid" id="Q5M8J0"/>
<dbReference type="OMA" id="SCTTAWP"/>
<dbReference type="OrthoDB" id="547311at2759"/>
<dbReference type="Reactome" id="R-XTR-5689901">
    <property type="pathway name" value="Metalloprotease DUBs"/>
</dbReference>
<dbReference type="Proteomes" id="UP000008143">
    <property type="component" value="Chromosome 1"/>
</dbReference>
<dbReference type="GO" id="GO:0070531">
    <property type="term" value="C:BRCA1-A complex"/>
    <property type="evidence" value="ECO:0000250"/>
    <property type="project" value="UniProtKB"/>
</dbReference>
<dbReference type="GO" id="GO:0070552">
    <property type="term" value="C:BRISC complex"/>
    <property type="evidence" value="ECO:0000250"/>
    <property type="project" value="UniProtKB"/>
</dbReference>
<dbReference type="GO" id="GO:0005737">
    <property type="term" value="C:cytoplasm"/>
    <property type="evidence" value="ECO:0000250"/>
    <property type="project" value="UniProtKB"/>
</dbReference>
<dbReference type="GO" id="GO:0005634">
    <property type="term" value="C:nucleus"/>
    <property type="evidence" value="ECO:0000250"/>
    <property type="project" value="UniProtKB"/>
</dbReference>
<dbReference type="GO" id="GO:0051301">
    <property type="term" value="P:cell division"/>
    <property type="evidence" value="ECO:0007669"/>
    <property type="project" value="UniProtKB-KW"/>
</dbReference>
<dbReference type="GO" id="GO:0140861">
    <property type="term" value="P:DNA repair-dependent chromatin remodeling"/>
    <property type="evidence" value="ECO:0000250"/>
    <property type="project" value="UniProtKB"/>
</dbReference>
<dbReference type="GO" id="GO:0006302">
    <property type="term" value="P:double-strand break repair"/>
    <property type="evidence" value="ECO:0000250"/>
    <property type="project" value="UniProtKB"/>
</dbReference>
<dbReference type="GO" id="GO:0007095">
    <property type="term" value="P:mitotic G2 DNA damage checkpoint signaling"/>
    <property type="evidence" value="ECO:0000250"/>
    <property type="project" value="UniProtKB"/>
</dbReference>
<dbReference type="GO" id="GO:0045739">
    <property type="term" value="P:positive regulation of DNA repair"/>
    <property type="evidence" value="ECO:0000250"/>
    <property type="project" value="UniProtKB"/>
</dbReference>
<dbReference type="GO" id="GO:0010212">
    <property type="term" value="P:response to ionizing radiation"/>
    <property type="evidence" value="ECO:0000250"/>
    <property type="project" value="UniProtKB"/>
</dbReference>
<dbReference type="CDD" id="cd21502">
    <property type="entry name" value="vWA_BABAM1"/>
    <property type="match status" value="1"/>
</dbReference>
<dbReference type="Gene3D" id="3.40.50.410">
    <property type="entry name" value="von Willebrand factor, type A domain"/>
    <property type="match status" value="1"/>
</dbReference>
<dbReference type="InterPro" id="IPR026126">
    <property type="entry name" value="BABAM1"/>
</dbReference>
<dbReference type="InterPro" id="IPR036465">
    <property type="entry name" value="vWFA_dom_sf"/>
</dbReference>
<dbReference type="PANTHER" id="PTHR15660">
    <property type="entry name" value="BRISC AND BRCA1-A COMPLEX MEMBER 1"/>
    <property type="match status" value="1"/>
</dbReference>
<dbReference type="PANTHER" id="PTHR15660:SF1">
    <property type="entry name" value="BRISC AND BRCA1-A COMPLEX MEMBER 1"/>
    <property type="match status" value="1"/>
</dbReference>
<dbReference type="SUPFAM" id="SSF53300">
    <property type="entry name" value="vWA-like"/>
    <property type="match status" value="1"/>
</dbReference>
<comment type="function">
    <text evidence="1">Component of the BRCA1-A complex, a complex that specifically recognizes 'Lys-63'-linked ubiquitinated histones H2A and H2AX at DNA lesions sites, leading to target the BRCA1-BARD1 heterodimer to sites of DNA damage at double-strand breaks (DSBs). The BRCA1-A complex also possesses deubiquitinase activity that specifically removes 'Lys-63'-linked ubiquitin on histones H2A and H2AX. In the BRCA1-A complex, it is required for the complex integrity and its localization at DSBs. Component of the BRISC complex, a multiprotein complex that specifically cleaves 'Lys-63'-linked ubiquitin in various substrates. In these 2 complexes, it is probably required to maintain the stability of BABAM2 and help the 'Lys-63'-linked deubiquitinase activity mediated by brcc3/brcc36 component. The BRISC complex is required for normal mitotic spindle assembly and microtubule attachment to kinetochores via its role in deubiquitinating numa1. Plays a role in interferon signaling via its role in the deubiquitination of the interferon receptor ifnar1; deubiquitination increases ifnar1 activity by enhancing its stability and cell surface expression. Down-regulates the response to bacterial lipopolysaccharide (LPS) via its role in ifnar1 deubiquitination.</text>
</comment>
<comment type="subunit">
    <text evidence="1">Component of the ARISC complex, at least composed of uimc1/rap80, abraxas1, brcc3/brcc36, BABAM2 and babam1/nba1. Component of the BRCA1-A complex, at least composed of brca1, bard1, uimc1/rap80, abraxas1, brcc3/brcc36, BABAM2 and babam1/nba1. In the BRCA1-A complex, interacts directly with abraxas1 and BABAM2. Component of the BRISC complex, at least composed of abraxas2, brcc3/brcc36, babam2 and babam1/nba1.</text>
</comment>
<comment type="subcellular location">
    <subcellularLocation>
        <location evidence="1">Cytoplasm</location>
    </subcellularLocation>
    <subcellularLocation>
        <location evidence="1">Nucleus</location>
    </subcellularLocation>
    <text evidence="1">Localizes at sites of DNA damage at double-strand breaks (DSBs).</text>
</comment>
<comment type="domain">
    <text evidence="1">The VWFA-like region is similar to the VWFA domain. Its presence reveals similarities between the structure of the 19S proteasome and the BRCA1-A complexes.</text>
</comment>
<comment type="similarity">
    <text evidence="3">Belongs to the BABAM1 family.</text>
</comment>
<organism>
    <name type="scientific">Xenopus tropicalis</name>
    <name type="common">Western clawed frog</name>
    <name type="synonym">Silurana tropicalis</name>
    <dbReference type="NCBI Taxonomy" id="8364"/>
    <lineage>
        <taxon>Eukaryota</taxon>
        <taxon>Metazoa</taxon>
        <taxon>Chordata</taxon>
        <taxon>Craniata</taxon>
        <taxon>Vertebrata</taxon>
        <taxon>Euteleostomi</taxon>
        <taxon>Amphibia</taxon>
        <taxon>Batrachia</taxon>
        <taxon>Anura</taxon>
        <taxon>Pipoidea</taxon>
        <taxon>Pipidae</taxon>
        <taxon>Xenopodinae</taxon>
        <taxon>Xenopus</taxon>
        <taxon>Silurana</taxon>
    </lineage>
</organism>
<keyword id="KW-0131">Cell cycle</keyword>
<keyword id="KW-0132">Cell division</keyword>
<keyword id="KW-0156">Chromatin regulator</keyword>
<keyword id="KW-0963">Cytoplasm</keyword>
<keyword id="KW-0227">DNA damage</keyword>
<keyword id="KW-0234">DNA repair</keyword>
<keyword id="KW-0498">Mitosis</keyword>
<keyword id="KW-0539">Nucleus</keyword>
<keyword id="KW-1185">Reference proteome</keyword>
<keyword id="KW-0833">Ubl conjugation pathway</keyword>